<reference key="1">
    <citation type="submission" date="2006-12" db="EMBL/GenBank/DDBJ databases">
        <title>Complete sequence of Chlorobium phaeobacteroides DSM 266.</title>
        <authorList>
            <consortium name="US DOE Joint Genome Institute"/>
            <person name="Copeland A."/>
            <person name="Lucas S."/>
            <person name="Lapidus A."/>
            <person name="Barry K."/>
            <person name="Detter J.C."/>
            <person name="Glavina del Rio T."/>
            <person name="Hammon N."/>
            <person name="Israni S."/>
            <person name="Pitluck S."/>
            <person name="Goltsman E."/>
            <person name="Schmutz J."/>
            <person name="Larimer F."/>
            <person name="Land M."/>
            <person name="Hauser L."/>
            <person name="Mikhailova N."/>
            <person name="Li T."/>
            <person name="Overmann J."/>
            <person name="Bryant D.A."/>
            <person name="Richardson P."/>
        </authorList>
    </citation>
    <scope>NUCLEOTIDE SEQUENCE [LARGE SCALE GENOMIC DNA]</scope>
    <source>
        <strain>DSM 266 / SMG 266 / 2430</strain>
    </source>
</reference>
<dbReference type="EMBL" id="CP000492">
    <property type="protein sequence ID" value="ABL66714.1"/>
    <property type="molecule type" value="Genomic_DNA"/>
</dbReference>
<dbReference type="RefSeq" id="WP_015961241.1">
    <property type="nucleotide sequence ID" value="NC_008639.1"/>
</dbReference>
<dbReference type="SMR" id="A1BJY7"/>
<dbReference type="STRING" id="290317.Cpha266_2730"/>
<dbReference type="KEGG" id="cph:Cpha266_2730"/>
<dbReference type="eggNOG" id="COG2001">
    <property type="taxonomic scope" value="Bacteria"/>
</dbReference>
<dbReference type="HOGENOM" id="CLU_107907_0_5_10"/>
<dbReference type="OrthoDB" id="9807753at2"/>
<dbReference type="Proteomes" id="UP000008701">
    <property type="component" value="Chromosome"/>
</dbReference>
<dbReference type="GO" id="GO:0005737">
    <property type="term" value="C:cytoplasm"/>
    <property type="evidence" value="ECO:0007669"/>
    <property type="project" value="UniProtKB-UniRule"/>
</dbReference>
<dbReference type="GO" id="GO:0009295">
    <property type="term" value="C:nucleoid"/>
    <property type="evidence" value="ECO:0007669"/>
    <property type="project" value="UniProtKB-SubCell"/>
</dbReference>
<dbReference type="GO" id="GO:0003700">
    <property type="term" value="F:DNA-binding transcription factor activity"/>
    <property type="evidence" value="ECO:0007669"/>
    <property type="project" value="UniProtKB-UniRule"/>
</dbReference>
<dbReference type="GO" id="GO:0000976">
    <property type="term" value="F:transcription cis-regulatory region binding"/>
    <property type="evidence" value="ECO:0007669"/>
    <property type="project" value="TreeGrafter"/>
</dbReference>
<dbReference type="GO" id="GO:2000143">
    <property type="term" value="P:negative regulation of DNA-templated transcription initiation"/>
    <property type="evidence" value="ECO:0007669"/>
    <property type="project" value="TreeGrafter"/>
</dbReference>
<dbReference type="CDD" id="cd16321">
    <property type="entry name" value="MraZ_C"/>
    <property type="match status" value="1"/>
</dbReference>
<dbReference type="CDD" id="cd16320">
    <property type="entry name" value="MraZ_N"/>
    <property type="match status" value="1"/>
</dbReference>
<dbReference type="Gene3D" id="3.40.1550.20">
    <property type="entry name" value="Transcriptional regulator MraZ domain"/>
    <property type="match status" value="1"/>
</dbReference>
<dbReference type="HAMAP" id="MF_01008">
    <property type="entry name" value="MraZ"/>
    <property type="match status" value="1"/>
</dbReference>
<dbReference type="InterPro" id="IPR003444">
    <property type="entry name" value="MraZ"/>
</dbReference>
<dbReference type="InterPro" id="IPR035644">
    <property type="entry name" value="MraZ_C"/>
</dbReference>
<dbReference type="InterPro" id="IPR020603">
    <property type="entry name" value="MraZ_dom"/>
</dbReference>
<dbReference type="InterPro" id="IPR035642">
    <property type="entry name" value="MraZ_N"/>
</dbReference>
<dbReference type="InterPro" id="IPR038619">
    <property type="entry name" value="MraZ_sf"/>
</dbReference>
<dbReference type="InterPro" id="IPR007159">
    <property type="entry name" value="SpoVT-AbrB_dom"/>
</dbReference>
<dbReference type="InterPro" id="IPR037914">
    <property type="entry name" value="SpoVT-AbrB_sf"/>
</dbReference>
<dbReference type="NCBIfam" id="NF001476">
    <property type="entry name" value="PRK00326.2-2"/>
    <property type="match status" value="1"/>
</dbReference>
<dbReference type="PANTHER" id="PTHR34701">
    <property type="entry name" value="TRANSCRIPTIONAL REGULATOR MRAZ"/>
    <property type="match status" value="1"/>
</dbReference>
<dbReference type="PANTHER" id="PTHR34701:SF1">
    <property type="entry name" value="TRANSCRIPTIONAL REGULATOR MRAZ"/>
    <property type="match status" value="1"/>
</dbReference>
<dbReference type="Pfam" id="PF02381">
    <property type="entry name" value="MraZ"/>
    <property type="match status" value="2"/>
</dbReference>
<dbReference type="SUPFAM" id="SSF89447">
    <property type="entry name" value="AbrB/MazE/MraZ-like"/>
    <property type="match status" value="1"/>
</dbReference>
<dbReference type="PROSITE" id="PS51740">
    <property type="entry name" value="SPOVT_ABRB"/>
    <property type="match status" value="2"/>
</dbReference>
<proteinExistence type="inferred from homology"/>
<organism>
    <name type="scientific">Chlorobium phaeobacteroides (strain DSM 266 / SMG 266 / 2430)</name>
    <dbReference type="NCBI Taxonomy" id="290317"/>
    <lineage>
        <taxon>Bacteria</taxon>
        <taxon>Pseudomonadati</taxon>
        <taxon>Chlorobiota</taxon>
        <taxon>Chlorobiia</taxon>
        <taxon>Chlorobiales</taxon>
        <taxon>Chlorobiaceae</taxon>
        <taxon>Chlorobium/Pelodictyon group</taxon>
        <taxon>Chlorobium</taxon>
    </lineage>
</organism>
<evidence type="ECO:0000255" key="1">
    <source>
        <dbReference type="HAMAP-Rule" id="MF_01008"/>
    </source>
</evidence>
<evidence type="ECO:0000255" key="2">
    <source>
        <dbReference type="PROSITE-ProRule" id="PRU01076"/>
    </source>
</evidence>
<name>MRAZ_CHLPD</name>
<protein>
    <recommendedName>
        <fullName>Transcriptional regulator MraZ</fullName>
    </recommendedName>
</protein>
<keyword id="KW-0963">Cytoplasm</keyword>
<keyword id="KW-0238">DNA-binding</keyword>
<keyword id="KW-1185">Reference proteome</keyword>
<keyword id="KW-0677">Repeat</keyword>
<keyword id="KW-0804">Transcription</keyword>
<keyword id="KW-0805">Transcription regulation</keyword>
<accession>A1BJY7</accession>
<gene>
    <name evidence="1" type="primary">mraZ</name>
    <name type="ordered locus">Cpha266_2730</name>
</gene>
<comment type="subunit">
    <text evidence="1">Forms oligomers.</text>
</comment>
<comment type="subcellular location">
    <subcellularLocation>
        <location evidence="1">Cytoplasm</location>
        <location evidence="1">Nucleoid</location>
    </subcellularLocation>
</comment>
<comment type="similarity">
    <text evidence="1">Belongs to the MraZ family.</text>
</comment>
<sequence>MAGFIGKERHALDEKGRLMIPVRFRRELSPESTGRGSTIYLMKAPDGSIELYEPDIWEGMKKSLAVLSDFNPEERLLKTMIYESLDVVAIDRQGRVPFSREFLEHAGIVRDVVIIGADTKMIVWAPERLSLLVMENAERYSSLARRYF</sequence>
<feature type="chain" id="PRO_1000062862" description="Transcriptional regulator MraZ">
    <location>
        <begin position="1"/>
        <end position="148"/>
    </location>
</feature>
<feature type="domain" description="SpoVT-AbrB 1" evidence="2">
    <location>
        <begin position="7"/>
        <end position="56"/>
    </location>
</feature>
<feature type="domain" description="SpoVT-AbrB 2" evidence="2">
    <location>
        <begin position="85"/>
        <end position="128"/>
    </location>
</feature>